<reference key="1">
    <citation type="journal article" date="2016" name="Chem. Commun. (Camb.)">
        <title>Identification of genes encoding squalestatin S1 biosynthesis and in vitro production of new squalestatin analogues.</title>
        <authorList>
            <person name="Bonsch B."/>
            <person name="Belt V."/>
            <person name="Bartel C."/>
            <person name="Duensing N."/>
            <person name="Koziol M."/>
            <person name="Lazarus C.M."/>
            <person name="Bailey A.M."/>
            <person name="Simpson T.J."/>
            <person name="Cox R.J."/>
        </authorList>
    </citation>
    <scope>NUCLEOTIDE SEQUENCE [GENOMIC DNA]</scope>
    <scope>FUNCTION</scope>
    <scope>INDUCTION</scope>
</reference>
<reference key="2">
    <citation type="journal article" date="2001" name="Chem. Biol.">
        <title>Design and utility of oligonucleotide gene probes for fungal polyketide synthases.</title>
        <authorList>
            <person name="Nicholson T.P."/>
            <person name="Rudd B.A."/>
            <person name="Dawson M."/>
            <person name="Lazarus C.M."/>
            <person name="Simpson T.J."/>
            <person name="Cox R.J."/>
        </authorList>
    </citation>
    <scope>FUNCTION</scope>
</reference>
<reference key="3">
    <citation type="journal article" date="2004" name="Chem. Commun. (Camb.)">
        <title>Rapid cloning and expression of a fungal polyketide synthase gene involved in squalestatin biosynthesis.</title>
        <authorList>
            <person name="Cox R.J."/>
            <person name="Glod F."/>
            <person name="Hurley D."/>
            <person name="Lazarus C.M."/>
            <person name="Nicholson T.P."/>
            <person name="Rudd B.A."/>
            <person name="Simpson T.J."/>
            <person name="Wilkinson B."/>
            <person name="Zhang Y."/>
        </authorList>
    </citation>
    <scope>FUNCTION</scope>
</reference>
<reference key="4">
    <citation type="journal article" date="2017" name="Chem. Commun. (Camb.)">
        <title>In vitro kinetic study of the squalestatin tetraketide synthase dehydratase reveals the stereochemical course of a fungal highly reducing polyketide synthase.</title>
        <authorList>
            <person name="Liddle E."/>
            <person name="Scott A."/>
            <person name="Han L.C."/>
            <person name="Ivison D."/>
            <person name="Simpson T.J."/>
            <person name="Willis C.L."/>
            <person name="Cox R.J."/>
        </authorList>
    </citation>
    <scope>FUNCTION</scope>
</reference>
<sequence>MSSRPLLKLALSLHDRLDELCSRGQIALVGYGLDVAAVAAVARHECFPIVDDEEVIARLNESTEILERSCRGSTMIYGVHTGFGGSADTRPDDSSGLGRGLMQLLQTGVLVVENLNISGPSTPQIMMPQSMPSSWTKATTAVRINQCVRGHSAIRHQTVKSLLKLVATQITPIVPLRGSISASGDLMPLSYIAGTLEGSPDIYVTKGSGKSAKIISAHEALGEIGMKPLLLGPREGLGLVNGTATSAATASLAVLDAIQLTLLSTGLTCLVSEGMAARVEWLHPFIAETRPHPGQGEVAAIMRAFLKGSRLVSGLEGEANAHLHTLNVRPDEGLPQDRYPLRTSPQWLGPQFEDLLLAHSQITIELNSTSDNPLTNLKTGAMHHGGNFQATSITSAVEKIRTSLQMVGKLLFSQCTEMINHQMNAGLPPNLAADDPSASFCCKGLDINIAAYQSELSYLSNSISNHVQSAEMHNQAVNSLAFLSTRYTIKAIELLGMMVAGVLYAACQAMDLRVMHATFLDTTTSTLQKAIADLLPNGFKSDDVEKSLATAVQGLRNAWWNNAGSDASERCSITAIAFVQVLCDPSKYHTDTHKEDICLDLTAKEMRQLQDDVRLHLSKAYHKHHSAFLEKPTTEEYIGKGSKALYLWTRQDLGIPMNRGLIDHPSPENLKEPGSVGKRTIGSYVSMIYQGIQDGRLFKRFATASREVGLGDGGVNGTRKRAYADYETP</sequence>
<accession>A0A3G1DJK5</accession>
<gene>
    <name evidence="9" type="primary">M7</name>
</gene>
<comment type="function">
    <text evidence="1 5 6 7 8 11">Phenylalanine ammonia-lyase; part of the gene cluster that mediates the biosynthesis of squalestatin S1 (SQS1, also known as zaragozic acid A), a heavily oxidized fungal polyketide that offers potent cholesterol lowering activity by targeting squalene synthase (SS) (PubMed:27056201). SQS1 is composed of a 2,8-dioxobicyclic[3.2.1]octane-3,4,5-tricarboxyclic acid core that is connected to two lipophilic polyketide arms (PubMed:27056201). These initial steps feature the priming of an unusual benzoic acid starter unit onto the highly reducing polyketide synthase pks2, followed by oxaloacetate extension and product release to generate a tricarboxylic acid containing product (By similarity). The phenylalanine ammonia lyase (PAL) M7 and the acyl-CoA ligase M9 are involved in transforming phenylalanine into benzoyl-CoA (By similarity). The citrate synthase-like protein R3 is involved in connecting the C-alpha-carbons of the hexaketide chain and oxaloacetate to afford the tricarboxylic acid unit (By similarity). The potential hydrolytic enzymes, M8 and M10, are in close proximity to pks2 and may participate in product release (By similarity). On the other side, the tetraketide arm is synthesized by a the squalestatin tetraketide synthase pks1 and enzymatically esterified to the core in the last biosynthetic step, by the acetyltransferase M4 (PubMed:11251290, PubMed:15489970, PubMed:28106181). The biosynthesis of the tetraketide must involve 3 rounds of chain extension (PubMed:11251290, PubMed:15489970, PubMed:28106181). After the first and second rounds methyl-transfer occurs, and in all rounds of extension the ketoreductase and dehydratase are active (PubMed:11251290, PubMed:15489970, PubMed:28106181). The enoyl reductase and C-MeT of pks1 are not active in the final round of extension (PubMed:11251290, PubMed:15489970, PubMed:28106181). The acetyltransferase M4 appears to have a broad substrate selectivity for its acyl CoA substrate, allowing the in vitro synthesis of novel squalestatins (Probable). The biosynthesis of SQS1 requires several oxidative steps likely performed by oxidoreductases M1, R1 and R2 (Probable). Finally, in support of the identification of the cluster as being responsible for SQS1 production, the cluster contains a gene encoding a putative squalene synthase (SS) R6, suggesting a likely mechanism for self-resistance (Probable).</text>
</comment>
<comment type="catalytic activity">
    <reaction evidence="4">
        <text>L-phenylalanine = (E)-cinnamate + NH4(+)</text>
        <dbReference type="Rhea" id="RHEA:21384"/>
        <dbReference type="ChEBI" id="CHEBI:15669"/>
        <dbReference type="ChEBI" id="CHEBI:28938"/>
        <dbReference type="ChEBI" id="CHEBI:58095"/>
        <dbReference type="EC" id="4.3.1.24"/>
    </reaction>
</comment>
<comment type="pathway">
    <text evidence="11">Secondary metabolite biosynthesis.</text>
</comment>
<comment type="pathway">
    <text evidence="4">Phenylpropanoid metabolism; trans-cinnamate biosynthesis; trans-cinnamate from L-phenylalanine: step 1/1.</text>
</comment>
<comment type="subcellular location">
    <subcellularLocation>
        <location evidence="4">Cytoplasm</location>
    </subcellularLocation>
</comment>
<comment type="induction">
    <text evidence="7">Expression is induced on squalestatin S1-producing YMG medium.</text>
</comment>
<comment type="PTM">
    <text evidence="3">Contains an active site 4-methylidene-imidazol-5-one (MIO), which is formed autocatalytically by cyclization and dehydration of residues Ala-Ser-Gly.</text>
</comment>
<comment type="similarity">
    <text evidence="10">Belongs to the PAL/histidase family.</text>
</comment>
<dbReference type="EC" id="4.3.1.24" evidence="4"/>
<dbReference type="EMBL" id="KU946987">
    <property type="protein sequence ID" value="AMY15064.1"/>
    <property type="molecule type" value="Genomic_DNA"/>
</dbReference>
<dbReference type="SMR" id="A0A3G1DJK5"/>
<dbReference type="UniPathway" id="UPA00713">
    <property type="reaction ID" value="UER00725"/>
</dbReference>
<dbReference type="GO" id="GO:0005737">
    <property type="term" value="C:cytoplasm"/>
    <property type="evidence" value="ECO:0007669"/>
    <property type="project" value="UniProtKB-SubCell"/>
</dbReference>
<dbReference type="GO" id="GO:0045548">
    <property type="term" value="F:phenylalanine ammonia-lyase activity"/>
    <property type="evidence" value="ECO:0007669"/>
    <property type="project" value="UniProtKB-EC"/>
</dbReference>
<dbReference type="GO" id="GO:0009800">
    <property type="term" value="P:cinnamic acid biosynthetic process"/>
    <property type="evidence" value="ECO:0007669"/>
    <property type="project" value="UniProtKB-UniPathway"/>
</dbReference>
<dbReference type="GO" id="GO:0006559">
    <property type="term" value="P:L-phenylalanine catabolic process"/>
    <property type="evidence" value="ECO:0007669"/>
    <property type="project" value="UniProtKB-KW"/>
</dbReference>
<dbReference type="CDD" id="cd00332">
    <property type="entry name" value="PAL-HAL"/>
    <property type="match status" value="1"/>
</dbReference>
<dbReference type="Gene3D" id="1.20.200.10">
    <property type="entry name" value="Fumarase/aspartase (Central domain)"/>
    <property type="match status" value="1"/>
</dbReference>
<dbReference type="Gene3D" id="1.10.275.10">
    <property type="entry name" value="Fumarase/aspartase (N-terminal domain)"/>
    <property type="match status" value="1"/>
</dbReference>
<dbReference type="Gene3D" id="1.10.274.20">
    <property type="entry name" value="Phenylalanine ammonia-lyase 1, domain 3"/>
    <property type="match status" value="1"/>
</dbReference>
<dbReference type="InterPro" id="IPR001106">
    <property type="entry name" value="Aromatic_Lyase"/>
</dbReference>
<dbReference type="InterPro" id="IPR024083">
    <property type="entry name" value="Fumarase/histidase_N"/>
</dbReference>
<dbReference type="InterPro" id="IPR008948">
    <property type="entry name" value="L-Aspartase-like"/>
</dbReference>
<dbReference type="InterPro" id="IPR022313">
    <property type="entry name" value="Phe/His_NH3-lyase_AS"/>
</dbReference>
<dbReference type="InterPro" id="IPR005922">
    <property type="entry name" value="Phe_NH3-lyase"/>
</dbReference>
<dbReference type="InterPro" id="IPR023144">
    <property type="entry name" value="Phe_NH3-lyase_shielding_dom_sf"/>
</dbReference>
<dbReference type="NCBIfam" id="TIGR01226">
    <property type="entry name" value="phe_am_lyase"/>
    <property type="match status" value="1"/>
</dbReference>
<dbReference type="PANTHER" id="PTHR10362">
    <property type="entry name" value="HISTIDINE AMMONIA-LYASE"/>
    <property type="match status" value="1"/>
</dbReference>
<dbReference type="Pfam" id="PF00221">
    <property type="entry name" value="Lyase_aromatic"/>
    <property type="match status" value="1"/>
</dbReference>
<dbReference type="SUPFAM" id="SSF48557">
    <property type="entry name" value="L-aspartase-like"/>
    <property type="match status" value="1"/>
</dbReference>
<dbReference type="PROSITE" id="PS00488">
    <property type="entry name" value="PAL_HISTIDASE"/>
    <property type="match status" value="1"/>
</dbReference>
<proteinExistence type="evidence at transcript level"/>
<organism>
    <name type="scientific">Phoma sp. (strain ATCC 20986 / MF5453)</name>
    <dbReference type="NCBI Taxonomy" id="1828523"/>
    <lineage>
        <taxon>Eukaryota</taxon>
        <taxon>Fungi</taxon>
        <taxon>Dikarya</taxon>
        <taxon>Ascomycota</taxon>
        <taxon>Pezizomycotina</taxon>
        <taxon>Dothideomycetes</taxon>
        <taxon>Pleosporomycetidae</taxon>
        <taxon>Pleosporales</taxon>
        <taxon>Pleosporineae</taxon>
        <taxon>Didymellaceae</taxon>
        <taxon>Phoma</taxon>
    </lineage>
</organism>
<feature type="chain" id="PRO_0000447836" description="Phenylalanine ammonia-lyase">
    <location>
        <begin position="1"/>
        <end position="729"/>
    </location>
</feature>
<feature type="active site" description="Proton donor/acceptor" evidence="2">
    <location>
        <position position="77"/>
    </location>
</feature>
<feature type="binding site" evidence="3">
    <location>
        <position position="241"/>
    </location>
    <ligand>
        <name>(E)-cinnamate</name>
        <dbReference type="ChEBI" id="CHEBI:15669"/>
    </ligand>
</feature>
<feature type="binding site" evidence="3">
    <location>
        <position position="336"/>
    </location>
    <ligand>
        <name>(E)-cinnamate</name>
        <dbReference type="ChEBI" id="CHEBI:15669"/>
    </ligand>
</feature>
<feature type="binding site" evidence="3">
    <location>
        <position position="342"/>
    </location>
    <ligand>
        <name>(E)-cinnamate</name>
        <dbReference type="ChEBI" id="CHEBI:15669"/>
    </ligand>
</feature>
<feature type="binding site" evidence="3">
    <location>
        <position position="372"/>
    </location>
    <ligand>
        <name>(E)-cinnamate</name>
        <dbReference type="ChEBI" id="CHEBI:15669"/>
    </ligand>
</feature>
<feature type="binding site" evidence="2">
    <location>
        <position position="443"/>
    </location>
    <ligand>
        <name>(E)-cinnamate</name>
        <dbReference type="ChEBI" id="CHEBI:15669"/>
    </ligand>
</feature>
<feature type="binding site" evidence="2">
    <location>
        <position position="471"/>
    </location>
    <ligand>
        <name>(E)-cinnamate</name>
        <dbReference type="ChEBI" id="CHEBI:15669"/>
    </ligand>
</feature>
<feature type="binding site" evidence="3">
    <location>
        <position position="474"/>
    </location>
    <ligand>
        <name>(E)-cinnamate</name>
        <dbReference type="ChEBI" id="CHEBI:15669"/>
    </ligand>
</feature>
<feature type="modified residue" description="2,3-didehydroalanine (Ser)" evidence="2">
    <location>
        <position position="183"/>
    </location>
</feature>
<feature type="cross-link" description="5-imidazolinone (Ala-Gly)" evidence="2">
    <location>
        <begin position="182"/>
        <end position="184"/>
    </location>
</feature>
<keyword id="KW-0963">Cytoplasm</keyword>
<keyword id="KW-0456">Lyase</keyword>
<keyword id="KW-0585">Phenylalanine catabolism</keyword>
<keyword id="KW-0587">Phenylpropanoid metabolism</keyword>
<name>MFM7_PHOSM</name>
<protein>
    <recommendedName>
        <fullName evidence="9">Phenylalanine ammonia-lyase</fullName>
        <shortName evidence="9">PAL</shortName>
        <ecNumber evidence="4">4.3.1.24</ecNumber>
    </recommendedName>
    <alternativeName>
        <fullName evidence="9">Squalestatin S1 biosynthesis cluster protein M7</fullName>
    </alternativeName>
</protein>
<evidence type="ECO:0000250" key="1">
    <source>
        <dbReference type="UniProtKB" id="A0A345BJN1"/>
    </source>
</evidence>
<evidence type="ECO:0000250" key="2">
    <source>
        <dbReference type="UniProtKB" id="P11544"/>
    </source>
</evidence>
<evidence type="ECO:0000250" key="3">
    <source>
        <dbReference type="UniProtKB" id="Q68G84"/>
    </source>
</evidence>
<evidence type="ECO:0000255" key="4">
    <source>
        <dbReference type="RuleBase" id="RU003955"/>
    </source>
</evidence>
<evidence type="ECO:0000269" key="5">
    <source>
    </source>
</evidence>
<evidence type="ECO:0000269" key="6">
    <source>
    </source>
</evidence>
<evidence type="ECO:0000269" key="7">
    <source>
    </source>
</evidence>
<evidence type="ECO:0000269" key="8">
    <source>
    </source>
</evidence>
<evidence type="ECO:0000303" key="9">
    <source>
    </source>
</evidence>
<evidence type="ECO:0000305" key="10"/>
<evidence type="ECO:0000305" key="11">
    <source>
    </source>
</evidence>